<gene>
    <name evidence="27" type="primary">SLC35A2</name>
    <name type="synonym">UGALT</name>
    <name type="synonym">UGT</name>
    <name type="synonym">UGTL</name>
</gene>
<dbReference type="EMBL" id="D88146">
    <property type="protein sequence ID" value="BAA13545.1"/>
    <property type="molecule type" value="mRNA"/>
</dbReference>
<dbReference type="EMBL" id="D84454">
    <property type="protein sequence ID" value="BAA12673.1"/>
    <property type="molecule type" value="mRNA"/>
</dbReference>
<dbReference type="EMBL" id="AB042425">
    <property type="protein sequence ID" value="BAA95614.1"/>
    <property type="molecule type" value="Genomic_DNA"/>
</dbReference>
<dbReference type="EMBL" id="AB042425">
    <property type="protein sequence ID" value="BAA95615.1"/>
    <property type="molecule type" value="Genomic_DNA"/>
</dbReference>
<dbReference type="EMBL" id="AK290284">
    <property type="protein sequence ID" value="BAF82973.1"/>
    <property type="molecule type" value="mRNA"/>
</dbReference>
<dbReference type="EMBL" id="AK292816">
    <property type="protein sequence ID" value="BAF85505.1"/>
    <property type="molecule type" value="mRNA"/>
</dbReference>
<dbReference type="EMBL" id="AK293415">
    <property type="protein sequence ID" value="BAG56922.1"/>
    <property type="molecule type" value="mRNA"/>
</dbReference>
<dbReference type="EMBL" id="AK298484">
    <property type="protein sequence ID" value="BAG60694.1"/>
    <property type="molecule type" value="mRNA"/>
</dbReference>
<dbReference type="EMBL" id="AF207550">
    <property type="status" value="NOT_ANNOTATED_CDS"/>
    <property type="molecule type" value="Genomic_DNA"/>
</dbReference>
<dbReference type="EMBL" id="CH471224">
    <property type="protein sequence ID" value="EAW50733.1"/>
    <property type="molecule type" value="Genomic_DNA"/>
</dbReference>
<dbReference type="EMBL" id="CH471224">
    <property type="protein sequence ID" value="EAW50734.1"/>
    <property type="molecule type" value="Genomic_DNA"/>
</dbReference>
<dbReference type="EMBL" id="BC035747">
    <property type="protein sequence ID" value="AAH35747.1"/>
    <property type="molecule type" value="mRNA"/>
</dbReference>
<dbReference type="CCDS" id="CCDS14311.1">
    <molecule id="P78381-1"/>
</dbReference>
<dbReference type="CCDS" id="CCDS35247.1">
    <molecule id="P78381-3"/>
</dbReference>
<dbReference type="CCDS" id="CCDS43937.1">
    <molecule id="P78381-2"/>
</dbReference>
<dbReference type="CCDS" id="CCDS65253.1">
    <molecule id="P78381-5"/>
</dbReference>
<dbReference type="CCDS" id="CCDS65254.1">
    <molecule id="P78381-4"/>
</dbReference>
<dbReference type="PIR" id="JC5022">
    <property type="entry name" value="JC5022"/>
</dbReference>
<dbReference type="RefSeq" id="NP_001027460.1">
    <molecule id="P78381-3"/>
    <property type="nucleotide sequence ID" value="NM_001032289.3"/>
</dbReference>
<dbReference type="RefSeq" id="NP_001035963.1">
    <molecule id="P78381-2"/>
    <property type="nucleotide sequence ID" value="NM_001042498.3"/>
</dbReference>
<dbReference type="RefSeq" id="NP_001269576.1">
    <property type="nucleotide sequence ID" value="NM_001282647.1"/>
</dbReference>
<dbReference type="RefSeq" id="NP_001269577.1">
    <property type="nucleotide sequence ID" value="NM_001282648.1"/>
</dbReference>
<dbReference type="RefSeq" id="NP_001269578.1">
    <molecule id="P78381-5"/>
    <property type="nucleotide sequence ID" value="NM_001282649.2"/>
</dbReference>
<dbReference type="RefSeq" id="NP_001269579.1">
    <property type="nucleotide sequence ID" value="NM_001282650.1"/>
</dbReference>
<dbReference type="RefSeq" id="NP_001269580.1">
    <molecule id="P78381-4"/>
    <property type="nucleotide sequence ID" value="NM_001282651.2"/>
</dbReference>
<dbReference type="RefSeq" id="NP_005651.1">
    <molecule id="P78381-1"/>
    <property type="nucleotide sequence ID" value="NM_005660.3"/>
</dbReference>
<dbReference type="SMR" id="P78381"/>
<dbReference type="BioGRID" id="113202">
    <property type="interactions" value="65"/>
</dbReference>
<dbReference type="ELM" id="P78381"/>
<dbReference type="FunCoup" id="P78381">
    <property type="interactions" value="1383"/>
</dbReference>
<dbReference type="IntAct" id="P78381">
    <property type="interactions" value="12"/>
</dbReference>
<dbReference type="MINT" id="P78381"/>
<dbReference type="STRING" id="9606.ENSP00000416002"/>
<dbReference type="ChEMBL" id="CHEMBL3430867"/>
<dbReference type="TCDB" id="2.A.7.12.6">
    <property type="family name" value="the drug/metabolite transporter (dmt) superfamily"/>
</dbReference>
<dbReference type="GlyGen" id="P78381">
    <property type="glycosylation" value="7 sites"/>
</dbReference>
<dbReference type="iPTMnet" id="P78381"/>
<dbReference type="PhosphoSitePlus" id="P78381"/>
<dbReference type="SwissPalm" id="P78381"/>
<dbReference type="BioMuta" id="SLC35A2"/>
<dbReference type="DMDM" id="2499228"/>
<dbReference type="jPOST" id="P78381"/>
<dbReference type="MassIVE" id="P78381"/>
<dbReference type="PaxDb" id="9606-ENSP00000416002"/>
<dbReference type="PeptideAtlas" id="P78381"/>
<dbReference type="ProteomicsDB" id="18770"/>
<dbReference type="ProteomicsDB" id="3913"/>
<dbReference type="ProteomicsDB" id="57603">
    <molecule id="P78381-1"/>
</dbReference>
<dbReference type="ProteomicsDB" id="57604">
    <molecule id="P78381-2"/>
</dbReference>
<dbReference type="ProteomicsDB" id="57605">
    <molecule id="P78381-3"/>
</dbReference>
<dbReference type="Pumba" id="P78381"/>
<dbReference type="Antibodypedia" id="25927">
    <property type="antibodies" value="66 antibodies from 17 providers"/>
</dbReference>
<dbReference type="DNASU" id="7355"/>
<dbReference type="Ensembl" id="ENST00000247138.11">
    <molecule id="P78381-1"/>
    <property type="protein sequence ID" value="ENSP00000247138.5"/>
    <property type="gene ID" value="ENSG00000102100.16"/>
</dbReference>
<dbReference type="Ensembl" id="ENST00000376521.6">
    <molecule id="P78381-2"/>
    <property type="protein sequence ID" value="ENSP00000365704.1"/>
    <property type="gene ID" value="ENSG00000102100.16"/>
</dbReference>
<dbReference type="Ensembl" id="ENST00000445167.7">
    <molecule id="P78381-3"/>
    <property type="protein sequence ID" value="ENSP00000402726.2"/>
    <property type="gene ID" value="ENSG00000102100.16"/>
</dbReference>
<dbReference type="Ensembl" id="ENST00000452555.7">
    <molecule id="P78381-4"/>
    <property type="protein sequence ID" value="ENSP00000416002.2"/>
    <property type="gene ID" value="ENSG00000102100.16"/>
</dbReference>
<dbReference type="Ensembl" id="ENST00000635285.1">
    <molecule id="P78381-2"/>
    <property type="protein sequence ID" value="ENSP00000489484.1"/>
    <property type="gene ID" value="ENSG00000102100.16"/>
</dbReference>
<dbReference type="Ensembl" id="ENST00000635589.1">
    <molecule id="P78381-5"/>
    <property type="protein sequence ID" value="ENSP00000489197.1"/>
    <property type="gene ID" value="ENSG00000102100.16"/>
</dbReference>
<dbReference type="Ensembl" id="ENST00000710051.1">
    <molecule id="P78381-2"/>
    <property type="protein sequence ID" value="ENSP00000518018.1"/>
    <property type="gene ID" value="ENSG00000292209.1"/>
</dbReference>
<dbReference type="Ensembl" id="ENST00000710052.1">
    <molecule id="P78381-1"/>
    <property type="protein sequence ID" value="ENSP00000518019.1"/>
    <property type="gene ID" value="ENSG00000292209.1"/>
</dbReference>
<dbReference type="Ensembl" id="ENST00000710056.1">
    <molecule id="P78381-2"/>
    <property type="protein sequence ID" value="ENSP00000518023.1"/>
    <property type="gene ID" value="ENSG00000292209.1"/>
</dbReference>
<dbReference type="Ensembl" id="ENST00000710057.1">
    <molecule id="P78381-3"/>
    <property type="protein sequence ID" value="ENSP00000518024.1"/>
    <property type="gene ID" value="ENSG00000292209.1"/>
</dbReference>
<dbReference type="Ensembl" id="ENST00000710060.1">
    <molecule id="P78381-5"/>
    <property type="protein sequence ID" value="ENSP00000518027.1"/>
    <property type="gene ID" value="ENSG00000292209.1"/>
</dbReference>
<dbReference type="Ensembl" id="ENST00000710062.1">
    <molecule id="P78381-4"/>
    <property type="protein sequence ID" value="ENSP00000518029.1"/>
    <property type="gene ID" value="ENSG00000292209.1"/>
</dbReference>
<dbReference type="GeneID" id="7355"/>
<dbReference type="KEGG" id="hsa:7355"/>
<dbReference type="MANE-Select" id="ENST00000247138.11">
    <property type="protein sequence ID" value="ENSP00000247138.5"/>
    <property type="RefSeq nucleotide sequence ID" value="NM_005660.3"/>
    <property type="RefSeq protein sequence ID" value="NP_005651.1"/>
</dbReference>
<dbReference type="UCSC" id="uc004dlo.3">
    <molecule id="P78381-1"/>
    <property type="organism name" value="human"/>
</dbReference>
<dbReference type="AGR" id="HGNC:11022"/>
<dbReference type="CTD" id="7355"/>
<dbReference type="DisGeNET" id="7355"/>
<dbReference type="GeneCards" id="SLC35A2"/>
<dbReference type="HGNC" id="HGNC:11022">
    <property type="gene designation" value="SLC35A2"/>
</dbReference>
<dbReference type="HPA" id="ENSG00000102100">
    <property type="expression patterns" value="Low tissue specificity"/>
</dbReference>
<dbReference type="MalaCards" id="SLC35A2"/>
<dbReference type="MIM" id="300896">
    <property type="type" value="phenotype"/>
</dbReference>
<dbReference type="MIM" id="314375">
    <property type="type" value="gene"/>
</dbReference>
<dbReference type="neXtProt" id="NX_P78381"/>
<dbReference type="OpenTargets" id="ENSG00000102100"/>
<dbReference type="Orphanet" id="268973">
    <property type="disease" value="Isolated focal cortical dysplasia type Ia"/>
</dbReference>
<dbReference type="Orphanet" id="356961">
    <property type="disease" value="SLC35A2-CDG"/>
</dbReference>
<dbReference type="PharmGKB" id="PA35890"/>
<dbReference type="VEuPathDB" id="HostDB:ENSG00000102100"/>
<dbReference type="eggNOG" id="KOG2234">
    <property type="taxonomic scope" value="Eukaryota"/>
</dbReference>
<dbReference type="GeneTree" id="ENSGT00950000182827"/>
<dbReference type="HOGENOM" id="CLU_024645_1_1_1"/>
<dbReference type="InParanoid" id="P78381"/>
<dbReference type="OMA" id="IEEDMMT"/>
<dbReference type="OrthoDB" id="408493at2759"/>
<dbReference type="PAN-GO" id="P78381">
    <property type="GO annotations" value="2 GO annotations based on evolutionary models"/>
</dbReference>
<dbReference type="PhylomeDB" id="P78381"/>
<dbReference type="TreeFam" id="TF315345"/>
<dbReference type="PathwayCommons" id="P78381"/>
<dbReference type="Reactome" id="R-HSA-5619072">
    <property type="pathway name" value="Defective SLC35A2 causes congenital disorder of glycosylation 2M (CDG2M)"/>
</dbReference>
<dbReference type="Reactome" id="R-HSA-727802">
    <property type="pathway name" value="Transport of nucleotide sugars"/>
</dbReference>
<dbReference type="SignaLink" id="P78381"/>
<dbReference type="SIGNOR" id="P78381"/>
<dbReference type="BioGRID-ORCS" id="7355">
    <property type="hits" value="74 hits in 804 CRISPR screens"/>
</dbReference>
<dbReference type="ChiTaRS" id="SLC35A2">
    <property type="organism name" value="human"/>
</dbReference>
<dbReference type="GeneWiki" id="SLC35A2"/>
<dbReference type="GenomeRNAi" id="7355"/>
<dbReference type="Pharos" id="P78381">
    <property type="development level" value="Tbio"/>
</dbReference>
<dbReference type="PRO" id="PR:P78381"/>
<dbReference type="Proteomes" id="UP000005640">
    <property type="component" value="Chromosome X"/>
</dbReference>
<dbReference type="RNAct" id="P78381">
    <property type="molecule type" value="protein"/>
</dbReference>
<dbReference type="Bgee" id="ENSG00000102100">
    <property type="expression patterns" value="Expressed in secondary oocyte and 190 other cell types or tissues"/>
</dbReference>
<dbReference type="ExpressionAtlas" id="P78381">
    <property type="expression patterns" value="baseline and differential"/>
</dbReference>
<dbReference type="GO" id="GO:0005783">
    <property type="term" value="C:endoplasmic reticulum"/>
    <property type="evidence" value="ECO:0000314"/>
    <property type="project" value="CACAO"/>
</dbReference>
<dbReference type="GO" id="GO:0005789">
    <property type="term" value="C:endoplasmic reticulum membrane"/>
    <property type="evidence" value="ECO:0007669"/>
    <property type="project" value="UniProtKB-SubCell"/>
</dbReference>
<dbReference type="GO" id="GO:0005794">
    <property type="term" value="C:Golgi apparatus"/>
    <property type="evidence" value="ECO:0000314"/>
    <property type="project" value="HPA"/>
</dbReference>
<dbReference type="GO" id="GO:0000139">
    <property type="term" value="C:Golgi membrane"/>
    <property type="evidence" value="ECO:0000314"/>
    <property type="project" value="UniProtKB"/>
</dbReference>
<dbReference type="GO" id="GO:0005654">
    <property type="term" value="C:nucleoplasm"/>
    <property type="evidence" value="ECO:0000314"/>
    <property type="project" value="HPA"/>
</dbReference>
<dbReference type="GO" id="GO:0015297">
    <property type="term" value="F:antiporter activity"/>
    <property type="evidence" value="ECO:0007669"/>
    <property type="project" value="UniProtKB-KW"/>
</dbReference>
<dbReference type="GO" id="GO:0005459">
    <property type="term" value="F:UDP-galactose transmembrane transporter activity"/>
    <property type="evidence" value="ECO:0000318"/>
    <property type="project" value="GO_Central"/>
</dbReference>
<dbReference type="GO" id="GO:0006012">
    <property type="term" value="P:galactose metabolic process"/>
    <property type="evidence" value="ECO:0000304"/>
    <property type="project" value="ProtInc"/>
</dbReference>
<dbReference type="GO" id="GO:0072334">
    <property type="term" value="P:UDP-galactose transmembrane transport"/>
    <property type="evidence" value="ECO:0000315"/>
    <property type="project" value="UniProtKB"/>
</dbReference>
<dbReference type="InterPro" id="IPR007271">
    <property type="entry name" value="Nuc_sug_transpt"/>
</dbReference>
<dbReference type="NCBIfam" id="TIGR00803">
    <property type="entry name" value="nst"/>
    <property type="match status" value="1"/>
</dbReference>
<dbReference type="PANTHER" id="PTHR10231">
    <property type="entry name" value="NUCLEOTIDE-SUGAR TRANSMEMBRANE TRANSPORTER"/>
    <property type="match status" value="1"/>
</dbReference>
<dbReference type="Pfam" id="PF04142">
    <property type="entry name" value="Nuc_sug_transp"/>
    <property type="match status" value="1"/>
</dbReference>
<dbReference type="PIRSF" id="PIRSF005799">
    <property type="entry name" value="UDP-gal_transpt"/>
    <property type="match status" value="1"/>
</dbReference>
<dbReference type="SUPFAM" id="SSF103481">
    <property type="entry name" value="Multidrug resistance efflux transporter EmrE"/>
    <property type="match status" value="1"/>
</dbReference>
<accession>P78381</accession>
<accession>A8K2L9</accession>
<accession>A8K9V1</accession>
<accession>B4DE11</accession>
<accession>B4DPT2</accession>
<accession>E7EW45</accession>
<accession>Q8IV21</accession>
<accession>Q92553</accession>
<organism>
    <name type="scientific">Homo sapiens</name>
    <name type="common">Human</name>
    <dbReference type="NCBI Taxonomy" id="9606"/>
    <lineage>
        <taxon>Eukaryota</taxon>
        <taxon>Metazoa</taxon>
        <taxon>Chordata</taxon>
        <taxon>Craniata</taxon>
        <taxon>Vertebrata</taxon>
        <taxon>Euteleostomi</taxon>
        <taxon>Mammalia</taxon>
        <taxon>Eutheria</taxon>
        <taxon>Euarchontoglires</taxon>
        <taxon>Primates</taxon>
        <taxon>Haplorrhini</taxon>
        <taxon>Catarrhini</taxon>
        <taxon>Hominidae</taxon>
        <taxon>Homo</taxon>
    </lineage>
</organism>
<keyword id="KW-0025">Alternative splicing</keyword>
<keyword id="KW-0050">Antiport</keyword>
<keyword id="KW-0900">Congenital disorder of glycosylation</keyword>
<keyword id="KW-0225">Disease variant</keyword>
<keyword id="KW-0256">Endoplasmic reticulum</keyword>
<keyword id="KW-0887">Epilepsy</keyword>
<keyword id="KW-0333">Golgi apparatus</keyword>
<keyword id="KW-0472">Membrane</keyword>
<keyword id="KW-1267">Proteomics identification</keyword>
<keyword id="KW-1185">Reference proteome</keyword>
<keyword id="KW-0762">Sugar transport</keyword>
<keyword id="KW-0812">Transmembrane</keyword>
<keyword id="KW-1133">Transmembrane helix</keyword>
<keyword id="KW-0813">Transport</keyword>
<comment type="function">
    <text evidence="3 4 8 16 17 21">Transports uridine diphosphate galactose (UDP-galactose) from the cytosol into the Golgi apparatus, functioning as an antiporter that exchanges UDP-galactose for UMP (PubMed:12682060, PubMed:9010752). It is also able to exchange UDP-galactose for AMP and CMP, and to transport UDP-N-acetylgalactosamine (UDP-GalNAc) and other nucleotide sugars (PubMed:11784306, PubMed:12682060). As a provider of UDP-galactose to galactosyltransferases present in the Golgi apparatus, it is necessary for globotriaosylceramide/globoside (Gb3Cer) synthesis from lactosylceramide (PubMed:30817854).</text>
</comment>
<comment type="catalytic activity">
    <reaction evidence="4 21">
        <text>UMP(out) + UDP-alpha-D-galactose(in) = UMP(in) + UDP-alpha-D-galactose(out)</text>
        <dbReference type="Rhea" id="RHEA:72703"/>
        <dbReference type="ChEBI" id="CHEBI:57865"/>
        <dbReference type="ChEBI" id="CHEBI:66914"/>
    </reaction>
</comment>
<comment type="catalytic activity">
    <reaction evidence="4">
        <text>UDP-N-acetyl-alpha-D-galactosamine(in) + UMP(out) = UDP-N-acetyl-alpha-D-galactosamine(out) + UMP(in)</text>
        <dbReference type="Rhea" id="RHEA:72735"/>
        <dbReference type="ChEBI" id="CHEBI:57865"/>
        <dbReference type="ChEBI" id="CHEBI:67138"/>
    </reaction>
</comment>
<comment type="catalytic activity">
    <reaction evidence="4">
        <text>UMP(out) + UDP-alpha-D-glucose(in) = UMP(in) + UDP-alpha-D-glucose(out)</text>
        <dbReference type="Rhea" id="RHEA:72731"/>
        <dbReference type="ChEBI" id="CHEBI:57865"/>
        <dbReference type="ChEBI" id="CHEBI:58885"/>
    </reaction>
</comment>
<comment type="catalytic activity">
    <reaction evidence="4">
        <text>UMP(out) + UDP-N-acetyl-alpha-D-glucosamine(in) = UMP(in) + UDP-N-acetyl-alpha-D-glucosamine(out)</text>
        <dbReference type="Rhea" id="RHEA:72695"/>
        <dbReference type="ChEBI" id="CHEBI:57705"/>
        <dbReference type="ChEBI" id="CHEBI:57865"/>
    </reaction>
</comment>
<comment type="catalytic activity">
    <reaction evidence="4">
        <text>UDP-alpha-D-galactose(in) + AMP(out) = UDP-alpha-D-galactose(out) + AMP(in)</text>
        <dbReference type="Rhea" id="RHEA:74599"/>
        <dbReference type="ChEBI" id="CHEBI:66914"/>
        <dbReference type="ChEBI" id="CHEBI:456215"/>
    </reaction>
</comment>
<comment type="catalytic activity">
    <reaction evidence="4">
        <text>UDP-alpha-D-galactose(in) + CMP(out) = UDP-alpha-D-galactose(out) + CMP(in)</text>
        <dbReference type="Rhea" id="RHEA:74603"/>
        <dbReference type="ChEBI" id="CHEBI:60377"/>
        <dbReference type="ChEBI" id="CHEBI:66914"/>
    </reaction>
</comment>
<comment type="catalytic activity">
    <reaction evidence="4">
        <text>UDP-N-acetyl-alpha-D-galactosamine(out) + UDP-alpha-D-galactose(in) = UDP-N-acetyl-alpha-D-galactosamine(in) + UDP-alpha-D-galactose(out)</text>
        <dbReference type="Rhea" id="RHEA:74607"/>
        <dbReference type="ChEBI" id="CHEBI:66914"/>
        <dbReference type="ChEBI" id="CHEBI:67138"/>
    </reaction>
</comment>
<comment type="catalytic activity">
    <reaction evidence="4">
        <text>UDP-N-acetyl-alpha-D-glucosamine(out) + UDP-alpha-D-galactose(in) = UDP-N-acetyl-alpha-D-glucosamine(in) + UDP-alpha-D-galactose(out)</text>
        <dbReference type="Rhea" id="RHEA:74611"/>
        <dbReference type="ChEBI" id="CHEBI:57705"/>
        <dbReference type="ChEBI" id="CHEBI:66914"/>
    </reaction>
</comment>
<comment type="catalytic activity">
    <reaction evidence="4">
        <text>UDP-alpha-D-galactose(in) + UDP-alpha-D-glucose(out) = UDP-alpha-D-galactose(out) + UDP-alpha-D-glucose(in)</text>
        <dbReference type="Rhea" id="RHEA:74615"/>
        <dbReference type="ChEBI" id="CHEBI:58885"/>
        <dbReference type="ChEBI" id="CHEBI:66914"/>
    </reaction>
</comment>
<comment type="catalytic activity">
    <reaction evidence="4">
        <text>UMP(out) + CMP(in) = UMP(in) + CMP(out)</text>
        <dbReference type="Rhea" id="RHEA:74619"/>
        <dbReference type="ChEBI" id="CHEBI:57865"/>
        <dbReference type="ChEBI" id="CHEBI:60377"/>
    </reaction>
</comment>
<comment type="catalytic activity">
    <reaction evidence="4">
        <text>UMP(out) + AMP(in) = UMP(in) + AMP(out)</text>
        <dbReference type="Rhea" id="RHEA:74623"/>
        <dbReference type="ChEBI" id="CHEBI:57865"/>
        <dbReference type="ChEBI" id="CHEBI:456215"/>
    </reaction>
</comment>
<comment type="biophysicochemical properties">
    <kinetics>
        <KM evidence="4">5.5 uM for UDP-alpha-D-galactose</KM>
        <KM evidence="3">2.5 uM for UDP-alpha-D-galactose</KM>
        <KM evidence="3">2.5 uM for UDP-N-acetyl-alpha-D-galactosamine</KM>
    </kinetics>
</comment>
<comment type="subunit">
    <text evidence="7 14">Interacts with SLC35A3; the interaction is reduced in the presence of SLC35A4 (PubMed:23089177, PubMed:28167211). Found in a complex with SLC35A3 and SLC35A4 (PubMed:28167211).</text>
</comment>
<comment type="subunit">
    <molecule>Isoform 2</molecule>
    <text evidence="18">Interacts with B4GALT4.</text>
</comment>
<comment type="interaction">
    <interactant intactId="EBI-745658">
        <id>P78381</id>
    </interactant>
    <interactant intactId="EBI-617403">
        <id>P16885</id>
        <label>PLCG2</label>
    </interactant>
    <organismsDiffer>false</organismsDiffer>
    <experiments>2</experiments>
</comment>
<comment type="interaction">
    <interactant intactId="EBI-8101118">
        <id>P78381-1</id>
    </interactant>
    <interactant intactId="EBI-3917581">
        <id>Q9Y2D2</id>
        <label>SLC35A3</label>
    </interactant>
    <organismsDiffer>false</organismsDiffer>
    <experiments>3</experiments>
</comment>
<comment type="interaction">
    <interactant intactId="EBI-13307533">
        <id>P78381-3</id>
    </interactant>
    <interactant intactId="EBI-747133">
        <id>P27658</id>
        <label>COL8A1</label>
    </interactant>
    <organismsDiffer>false</organismsDiffer>
    <experiments>3</experiments>
</comment>
<comment type="subcellular location">
    <molecule>Isoform 1</molecule>
    <subcellularLocation>
        <location evidence="5">Endoplasmic reticulum membrane</location>
    </subcellularLocation>
    <subcellularLocation>
        <location evidence="5 9 14">Golgi apparatus membrane</location>
        <topology evidence="1">Multi-pass membrane protein</topology>
    </subcellularLocation>
</comment>
<comment type="subcellular location">
    <molecule>Isoform 2</molecule>
    <subcellularLocation>
        <location evidence="5">Golgi apparatus membrane</location>
    </subcellularLocation>
</comment>
<comment type="alternative products">
    <event type="alternative splicing"/>
    <isoform>
        <id>P78381-1</id>
        <name>1</name>
        <name>UGT2</name>
        <sequence type="displayed"/>
    </isoform>
    <isoform>
        <id>P78381-2</id>
        <name>2</name>
        <name>UGT1</name>
        <sequence type="described" ref="VSP_003728"/>
    </isoform>
    <isoform>
        <id>P78381-3</id>
        <name>3</name>
        <sequence type="described" ref="VSP_042029"/>
    </isoform>
    <isoform>
        <id>P78381-4</id>
        <name>4</name>
        <sequence type="described" ref="VSP_054335 VSP_003728"/>
    </isoform>
    <isoform>
        <id>P78381-5</id>
        <name>5</name>
        <sequence type="described" ref="VSP_055197 VSP_003728"/>
    </isoform>
</comment>
<comment type="disease" evidence="8 9 10 16 17 19 20">
    <disease id="DI-03722">
        <name>Congenital disorder of glycosylation 2M</name>
        <acronym>CDG2M</acronym>
        <description>An X-linked dominant, severe neurologic disorder characterized by developmental delay, hypotonia, ocular anomalies, and brain malformations. Othere more variable clinical features included seizures, hypsarrhythmia, poor feeding, microcephaly, recurrent infections, dysmorphic features, shortened limbs, and coagulation defects. Congenital disorders of glycosylation are caused by a defect in glycoprotein biosynthesis and characterized by under-glycosylated serum glycoproteins and a wide variety of clinical features. The broad spectrum of features reflects the critical role of N-glycoproteins during embryonic development, differentiation, and maintenance of cell functions.</description>
        <dbReference type="MIM" id="300896"/>
    </disease>
    <text>The disease is caused by variants affecting the gene represented in this entry.</text>
</comment>
<comment type="similarity">
    <text evidence="25">Belongs to the nucleotide-sugar transporter family. SLC35A subfamily.</text>
</comment>
<feature type="chain" id="PRO_0000213353" description="UDP-galactose translocator">
    <location>
        <begin position="1"/>
        <end position="396"/>
    </location>
</feature>
<feature type="transmembrane region" description="Helical" evidence="1">
    <location>
        <begin position="3"/>
        <end position="23"/>
    </location>
</feature>
<feature type="transmembrane region" description="Helical" evidence="1">
    <location>
        <begin position="37"/>
        <end position="57"/>
    </location>
</feature>
<feature type="transmembrane region" description="Helical" evidence="1">
    <location>
        <begin position="65"/>
        <end position="85"/>
    </location>
</feature>
<feature type="transmembrane region" description="Helical" evidence="1">
    <location>
        <begin position="97"/>
        <end position="117"/>
    </location>
</feature>
<feature type="transmembrane region" description="Helical" evidence="1">
    <location>
        <begin position="140"/>
        <end position="160"/>
    </location>
</feature>
<feature type="transmembrane region" description="Helical" evidence="1">
    <location>
        <begin position="169"/>
        <end position="189"/>
    </location>
</feature>
<feature type="transmembrane region" description="Helical" evidence="1">
    <location>
        <begin position="200"/>
        <end position="220"/>
    </location>
</feature>
<feature type="transmembrane region" description="Helical" evidence="1">
    <location>
        <begin position="238"/>
        <end position="258"/>
    </location>
</feature>
<feature type="transmembrane region" description="Helical" evidence="1">
    <location>
        <begin position="269"/>
        <end position="289"/>
    </location>
</feature>
<feature type="transmembrane region" description="Helical" evidence="1">
    <location>
        <begin position="315"/>
        <end position="335"/>
    </location>
</feature>
<feature type="region of interest" description="Disordered" evidence="2">
    <location>
        <begin position="358"/>
        <end position="379"/>
    </location>
</feature>
<feature type="short sequence motif" description="ER retention motif" evidence="5">
    <location>
        <begin position="392"/>
        <end position="396"/>
    </location>
</feature>
<feature type="splice variant" id="VSP_054335" description="In isoform 4." evidence="22">
    <original>A</original>
    <variation>AELLLTWEEAEARGQGLPQPLPDTSVRIP</variation>
    <location>
        <position position="30"/>
    </location>
</feature>
<feature type="splice variant" id="VSP_055197" description="In isoform 5." evidence="22">
    <location>
        <begin position="31"/>
        <end position="91"/>
    </location>
</feature>
<feature type="splice variant" id="VSP_042029" description="In isoform 3." evidence="22 23">
    <original>VTYQLKILTTALFSVLMLNRSLSRLQWASLLLLFTGVAIVQAQQAGGGGPRPLDQNPGAGLAAVVASCLSSGFAGVYFEKILKGSSGSVWLRNLQLGLFGTALGLVGLWWAEGTAVATRGFFFGYTPAVWGVVLNQAFGGLLVAVVVKYADNILKGFATSLSIVLSTVASIRLFGFHVDPLFALGAGLVIGAVYLYSLPRGAAKAIASASASASGPCVHQQPPGQPPPPQLSSHRGDLITEPFLPKLLTKVKGS</original>
    <variation>PSPRCSQSHSLCLCLRLRALRSPAASRAATTTAAVFPPWRPHHGALSAKVSAGEVRAGSNGGTQGRGTGVEGVGHLQDPSRHPPGPGSSGFGRWSFLPGH</variation>
    <location>
        <begin position="143"/>
        <end position="396"/>
    </location>
</feature>
<feature type="splice variant" id="VSP_003728" description="In isoform 2, isoform 4 and isoform 5." evidence="22 24">
    <original>LLTKVKGS</original>
    <variation>SVLVK</variation>
    <location>
        <begin position="389"/>
        <end position="396"/>
    </location>
</feature>
<feature type="sequence variant" id="VAR_089714" description="In CDG2M; uncertain significance." evidence="20">
    <original>G</original>
    <variation>R</variation>
    <location>
        <position position="16"/>
    </location>
</feature>
<feature type="sequence variant" id="VAR_086839" description="Found in a patient with infantile spasms and cortical abnormalities; uncertain significance; somatic mutation; able to rescue defective Gb3Cer expression in SLC35A2-deficient cells." evidence="15 17">
    <original>R</original>
    <variation>L</variation>
    <location>
        <position position="55"/>
    </location>
</feature>
<feature type="sequence variant" id="VAR_087467" description="In CDG2M." evidence="16">
    <original>R</original>
    <variation>P</variation>
    <location>
        <position position="55"/>
    </location>
</feature>
<feature type="sequence variant" id="VAR_087468" description="In CDG2M." evidence="16">
    <location>
        <begin position="56"/>
        <end position="396"/>
    </location>
</feature>
<feature type="sequence variant" id="VAR_087469" description="In CDG2M." evidence="16">
    <location>
        <begin position="65"/>
        <end position="68"/>
    </location>
</feature>
<feature type="sequence variant" id="VAR_087470" description="In CDG2M; reduced UDP-galactose transport in patient fibroblasts; no effect on localization to Golgi apparatus." evidence="16 19">
    <original>V</original>
    <variation>M</variation>
    <location>
        <position position="71"/>
    </location>
</feature>
<feature type="sequence variant" id="VAR_087471" description="In CDG2M; reduced UDP-galactose transport in patient fibroblasts; no effect on localization to Golgi apparatus; dbSNP:rs1557043622." evidence="16 19">
    <original>C</original>
    <variation>F</variation>
    <location>
        <position position="82"/>
    </location>
</feature>
<feature type="sequence variant" id="VAR_087472" description="In CDG2M." evidence="16">
    <original>L</original>
    <variation>P</variation>
    <location>
        <position position="101"/>
    </location>
</feature>
<feature type="sequence variant" id="VAR_087473" description="In CDG2M; dbSNP:rs1557043133." evidence="16">
    <original>A</original>
    <variation>P</variation>
    <location>
        <position position="116"/>
    </location>
</feature>
<feature type="sequence variant" id="VAR_087474" description="In CDG2M." evidence="16">
    <original>P</original>
    <variation>R</variation>
    <location>
        <position position="118"/>
    </location>
</feature>
<feature type="sequence variant" id="VAR_087475" description="In CDG2M; loss of UDP-galactose transport in patient fibroblasts; no effect on localization to Golgi apparatus." evidence="16 19">
    <original>Y</original>
    <variation>C</variation>
    <location>
        <position position="130"/>
    </location>
</feature>
<feature type="sequence variant" id="VAR_087476" description="In CDG2M; reduced UDP-galactose transport in patient fibroblasts." evidence="16">
    <location>
        <begin position="168"/>
        <end position="396"/>
    </location>
</feature>
<feature type="sequence variant" id="VAR_087477" description="In CDG2M; no effect on localization to Golgi apparatus; dbSNP:rs1283637638." evidence="16 19">
    <original>L</original>
    <variation>F</variation>
    <location>
        <position position="175"/>
    </location>
</feature>
<feature type="sequence variant" id="VAR_087478" description="In CDG2M; dbSNP:rs1602338996." evidence="16">
    <location>
        <position position="175"/>
    </location>
</feature>
<feature type="sequence variant" id="VAR_087479" description="In CDG2M." evidence="16">
    <location>
        <begin position="183"/>
        <end position="396"/>
    </location>
</feature>
<feature type="sequence variant" id="VAR_087480" description="In CDG2M; uncertain significance; dbSNP:rs1023107993." evidence="16">
    <original>G</original>
    <variation>S</variation>
    <location>
        <position position="188"/>
    </location>
</feature>
<feature type="sequence variant" id="VAR_071699" description="In CDG2M; has no effect on localization to Golgi; partially rescues defective Gb3Cer expression in SLC35A2-deficient cells; dbSNP:rs587777436." evidence="9 17">
    <original>S</original>
    <variation>F</variation>
    <location>
        <position position="213"/>
    </location>
</feature>
<feature type="sequence variant" id="VAR_087481" description="In CDG2M; reduced UDP-galactose transport in patient fibroblasts; no effect on localization to Golgi apparatus." evidence="16 19">
    <original>L</original>
    <variation>P</variation>
    <location>
        <position position="233"/>
    </location>
</feature>
<feature type="sequence variant" id="VAR_036579" description="In a breast cancer sample; somatic mutation." evidence="6">
    <original>W</original>
    <variation>C</variation>
    <location>
        <position position="252"/>
    </location>
</feature>
<feature type="sequence variant" id="VAR_079035" description="Found in a patient with Rett syndrome-like phenotype; uncertain significance; able to rescue defective Gb3Cer expression in SLC35A2-deficient cells; dbSNP:rs1557042828." evidence="13 17">
    <original>V</original>
    <variation>M</variation>
    <location>
        <position position="258"/>
    </location>
</feature>
<feature type="sequence variant" id="VAR_086840" description="In CDG2M; fails to rescue defective galactosylation in SLC35A2-deficient cells; able to rescue defective Gb3Cer expression in SLC35A2-deficient cells." evidence="10 17">
    <original>G</original>
    <variation>V</variation>
    <location>
        <position position="266"/>
    </location>
</feature>
<feature type="sequence variant" id="VAR_086841" description="Found in a patient with cerebral visual impairment; uncertain significance; able to rescue defective Gb3Cer expression in SLC35A2-deficient cells; dbSNP:rs869312860." evidence="12 17">
    <original>Y</original>
    <variation>C</variation>
    <location>
        <position position="267"/>
    </location>
</feature>
<feature type="sequence variant" id="VAR_087482" description="In CDG2M." evidence="16">
    <location>
        <begin position="272"/>
        <end position="396"/>
    </location>
</feature>
<feature type="sequence variant" id="VAR_087483" description="In CDG2M; no effect on localization to Golgi apparatus; dbSNP:rs1557042798." evidence="16 19">
    <original>G</original>
    <variation>D</variation>
    <location>
        <position position="273"/>
    </location>
</feature>
<feature type="sequence variant" id="VAR_086842" description="Found in a patient with West syndrome; uncertain significance; does not rescue defective Gb3Cer expression in SLC35A2-deficient cells; dbSNP:rs2063478987." evidence="11 17">
    <original>G</original>
    <variation>R</variation>
    <location>
        <position position="282"/>
    </location>
</feature>
<feature type="sequence variant" id="VAR_087484" description="In CDG2M." evidence="16">
    <original>L</original>
    <variation>P</variation>
    <location>
        <position position="303"/>
    </location>
</feature>
<feature type="sequence variant" id="VAR_086843" description="Found in a patient with non-lesional focal epilepsy; uncertain significance; somatic mutation; able to rescue defective Gb3Cer expression in SLC35A2-deficient cells." evidence="15 17">
    <original>S</original>
    <variation>P</variation>
    <location>
        <position position="304"/>
    </location>
</feature>
<feature type="sequence variant" id="VAR_087485" description="In CDG2M." evidence="16">
    <original>S</original>
    <variation>Y</variation>
    <location>
        <position position="312"/>
    </location>
</feature>
<feature type="sequence variant" id="VAR_087486" description="In CDG2M; reduced UDP-galactose transport in patient fibroblasts; no effect on localization to Golgi apparatus; dbSNP:rs1131691973." evidence="16 19">
    <original>L</original>
    <variation>P</variation>
    <location>
        <position position="315"/>
    </location>
</feature>
<feature type="sequence variant" id="VAR_069773" description="In CDG2M; in patient fibroblasts, results in reduced UDP-galactose transport into the Golgi; able to rescue defective Gb3Cer expression in SLC35A2-deficient cells; dbSNP:rs587776961." evidence="8 16 17">
    <original>V</original>
    <variation>I</variation>
    <location>
        <position position="331"/>
    </location>
</feature>
<feature type="mutagenesis site" description="No effect on localization to Golgi apparatus." evidence="19">
    <original>F</original>
    <variation>L</variation>
    <location>
        <position position="65"/>
    </location>
</feature>
<feature type="mutagenesis site" description="Partially rescues defective Gb3Cer expression in SLC35A2-deficient cells suggesting reduced UDP-galactose transport. No effect on localization to Golgi apparatus." evidence="19">
    <original>E</original>
    <variation>A</variation>
    <location>
        <position position="75"/>
    </location>
</feature>
<feature type="mutagenesis site" description="Does not rescue defective Gb3Cer expression in SLC35A2-deficient cells suggesting loss of UDP-galactose transport." evidence="17">
    <original>K</original>
    <variation>A</variation>
    <location>
        <position position="78"/>
    </location>
</feature>
<feature type="mutagenesis site" description="Does not rescue defective Gb3Cer expression in SLC35A2-deficient cells suggesting loss of UDP-galactose transport; when associated with A-126, A-129 and A-278. No effect on localization to Golgi apparatus." evidence="19">
    <original>Q</original>
    <variation>A</variation>
    <location>
        <position position="125"/>
    </location>
</feature>
<feature type="mutagenesis site" description="Does not rescue defective Gb3Cer expression in SLC35A2-deficient cells suggesting loss of UDP-galactose transport; when associated with A-125, A-129 and A-278. No effect on localization to Golgi apparatus." evidence="19">
    <original>N</original>
    <variation>A</variation>
    <location>
        <position position="126"/>
    </location>
</feature>
<feature type="mutagenesis site" description="Does not rescue defective Gb3Cer expression in SLC35A2-deficient cells suggesting loss of UDP-galactose transport; when associated with A-125, A-126 and A-278. No effect on localization to Golgi apparatus." evidence="19">
    <original>Q</original>
    <variation>A</variation>
    <location>
        <position position="129"/>
    </location>
</feature>
<feature type="mutagenesis site" description="No effect on localization to Golgi apparatus." evidence="19">
    <original>F</original>
    <variation>A</variation>
    <location>
        <position position="141"/>
    </location>
</feature>
<feature type="mutagenesis site" description="No effect on localization to Golgi apparatus." evidence="19">
    <original>Q</original>
    <variation>A</variation>
    <location>
        <position position="142"/>
    </location>
</feature>
<feature type="mutagenesis site" description="No effect on localization to Golgi apparatus." evidence="19">
    <original>Y</original>
    <variation>A</variation>
    <location>
        <position position="145"/>
    </location>
</feature>
<feature type="mutagenesis site" description="No effect on localization to Golgi apparatus." evidence="19">
    <original>Q</original>
    <variation>A</variation>
    <location>
        <position position="146"/>
    </location>
</feature>
<feature type="mutagenesis site" description="Partially rescues defective Gb3Cer expression in SLC35A2-deficient cells suggesting reduced UDP-galactose transport. No effect on localization to Golgi apparatus." evidence="19">
    <original>K</original>
    <variation>A</variation>
    <location>
        <position position="148"/>
    </location>
</feature>
<feature type="mutagenesis site" description="No effect on localization to Golgi apparatus." evidence="19">
    <original>T</original>
    <variation>A</variation>
    <location>
        <position position="152"/>
    </location>
</feature>
<feature type="mutagenesis site" description="Partially rescues defective Gb3Cer expression in SLC35A2-deficient cells suggesting reduced UDP-galactose transport. No effect on localization to Golgi apparatus." evidence="19">
    <original>T</original>
    <variation>F</variation>
    <location>
        <position position="152"/>
    </location>
</feature>
<feature type="mutagenesis site" description="Partially rescues defective Gb3Cer expression in SLC35A2-deficient cells suggesting reduced UDP-galactose transport." evidence="17">
    <original>G</original>
    <variation>I</variation>
    <location>
        <position position="202"/>
    </location>
</feature>
<feature type="mutagenesis site" description="No effect on localization to Golgi apparatus." evidence="19">
    <original>S</original>
    <variation>A</variation>
    <location>
        <position position="213"/>
    </location>
</feature>
<feature type="mutagenesis site" description="Does not rescue defective Gb3Cer expression in SLC35A2-deficient cells suggesting loss of UDP-galactose transport." evidence="17">
    <original>G</original>
    <variation>I</variation>
    <location>
        <position position="214"/>
    </location>
</feature>
<feature type="mutagenesis site" description="No effect on localization to Golgi apparatus." evidence="19">
    <original>N</original>
    <variation>A</variation>
    <variation>Q</variation>
    <location>
        <position position="235"/>
    </location>
</feature>
<feature type="mutagenesis site" description="No effect on localization to Golgi apparatus." evidence="19">
    <original>G</original>
    <variation>Y</variation>
    <location>
        <position position="239"/>
    </location>
</feature>
<feature type="mutagenesis site" description="No effect on localization to Golgi apparatus." evidence="19">
    <original>N</original>
    <variation>K</variation>
    <location>
        <position position="277"/>
    </location>
</feature>
<feature type="mutagenesis site" description="Does not rescue defective Gb3Cer expression in SLC35A2-deficient cells suggesting loss of UDP-galactose transport; when associated with A-125, A-126 and A-129. No effect on localization to Golgi apparatus." evidence="19">
    <original>Q</original>
    <variation>A</variation>
    <location>
        <position position="278"/>
    </location>
</feature>
<feature type="mutagenesis site" description="No effect on localization to Golgi apparatus." evidence="19">
    <original>V</original>
    <variation>A</variation>
    <location>
        <position position="285"/>
    </location>
</feature>
<feature type="mutagenesis site" description="No effect on localization to Golgi apparatus." evidence="19">
    <original>N</original>
    <variation>A</variation>
    <location>
        <position position="294"/>
    </location>
</feature>
<feature type="mutagenesis site" description="Does not rescue defective Gb3Cer expression in SLC35A2-deficient cells suggesting loss of UDP-galactose transport." evidence="17">
    <original>K</original>
    <variation>A</variation>
    <location>
        <position position="297"/>
    </location>
</feature>
<feature type="mutagenesis site" description="Does not rescue defective Gb3Cer expression in SLC35A2-deficient cells suggesting loss of UDP-galactose transport. No effect on localization to Golgi apparatus." evidence="19">
    <original>K</original>
    <variation>E</variation>
    <location>
        <position position="297"/>
    </location>
</feature>
<feature type="mutagenesis site" description="No effect on localization to Golgi apparatus." evidence="19">
    <original>T</original>
    <variation>A</variation>
    <location>
        <position position="301"/>
    </location>
</feature>
<feature type="mutagenesis site" description="No effect on localization to Golgi apparatus." evidence="19">
    <original>S</original>
    <variation>F</variation>
    <location>
        <position position="308"/>
    </location>
</feature>
<feature type="sequence conflict" description="In Ref. 5; BAF82973." evidence="25" ref="5">
    <original>L</original>
    <variation>P</variation>
    <location>
        <position position="85"/>
    </location>
</feature>
<feature type="sequence conflict" description="In Ref. 5; BAG60694." evidence="25" ref="5">
    <original>V</original>
    <variation>A</variation>
    <location>
        <position position="110"/>
    </location>
</feature>
<reference key="1">
    <citation type="journal article" date="1996" name="J. Biochem.">
        <title>Human UDP-galactose translocator: molecular cloning of a complementary DNA that complements the genetic defect of a mutant cell line deficient in UDP-galactose translocator.</title>
        <authorList>
            <person name="Miura N."/>
            <person name="Ishida N."/>
            <person name="Hoshino M."/>
            <person name="Yamauchi M."/>
            <person name="Hara T."/>
            <person name="Ayusawa D."/>
            <person name="Kawakita M."/>
        </authorList>
    </citation>
    <scope>NUCLEOTIDE SEQUENCE [MRNA] (ISOFORM 1)</scope>
</reference>
<reference key="2">
    <citation type="journal article" date="1996" name="J. Biochem.">
        <title>Molecular cloning and characterization of a novel isoform of the human UDP-galactose transporter, and of related complementary DNAs belonging to the nucleotide-sugar transporter gene family.</title>
        <authorList>
            <person name="Ishida N."/>
            <person name="Miura N."/>
            <person name="Yoshioka S."/>
            <person name="Kawakita M."/>
        </authorList>
    </citation>
    <scope>NUCLEOTIDE SEQUENCE [MRNA] (ISOFORM 2)</scope>
    <scope>FUNCTION</scope>
    <scope>TRANSPORTER ACTIVITY</scope>
    <source>
        <tissue>Fibroblast</tissue>
    </source>
</reference>
<reference key="3">
    <citation type="journal article" date="1993" name="Somat. Cell Mol. Genet.">
        <title>The UDP-galactose translocator gene is mapped to band Xp11.23-p11.22 containing the Wiskott-Aldrich syndrome locus.</title>
        <authorList>
            <person name="Hara T."/>
            <person name="Yamauchi M."/>
            <person name="Takahashi E."/>
            <person name="Hoshino M."/>
            <person name="Aoki K."/>
            <person name="Ayusawa D."/>
            <person name="Kawakita M."/>
        </authorList>
    </citation>
    <scope>NUCLEOTIDE SEQUENCE [GENOMIC DNA]</scope>
</reference>
<reference key="4">
    <citation type="submission" date="2000-05" db="EMBL/GenBank/DDBJ databases">
        <title>Genomic organization of the human UDP-galactose transporter gene.</title>
        <authorList>
            <person name="Ishida N."/>
            <person name="Miura N."/>
            <person name="Yamauchi M."/>
            <person name="Kawakita M."/>
        </authorList>
    </citation>
    <scope>NUCLEOTIDE SEQUENCE [GENOMIC DNA]</scope>
</reference>
<reference key="5">
    <citation type="journal article" date="2004" name="Nat. Genet.">
        <title>Complete sequencing and characterization of 21,243 full-length human cDNAs.</title>
        <authorList>
            <person name="Ota T."/>
            <person name="Suzuki Y."/>
            <person name="Nishikawa T."/>
            <person name="Otsuki T."/>
            <person name="Sugiyama T."/>
            <person name="Irie R."/>
            <person name="Wakamatsu A."/>
            <person name="Hayashi K."/>
            <person name="Sato H."/>
            <person name="Nagai K."/>
            <person name="Kimura K."/>
            <person name="Makita H."/>
            <person name="Sekine M."/>
            <person name="Obayashi M."/>
            <person name="Nishi T."/>
            <person name="Shibahara T."/>
            <person name="Tanaka T."/>
            <person name="Ishii S."/>
            <person name="Yamamoto J."/>
            <person name="Saito K."/>
            <person name="Kawai Y."/>
            <person name="Isono Y."/>
            <person name="Nakamura Y."/>
            <person name="Nagahari K."/>
            <person name="Murakami K."/>
            <person name="Yasuda T."/>
            <person name="Iwayanagi T."/>
            <person name="Wagatsuma M."/>
            <person name="Shiratori A."/>
            <person name="Sudo H."/>
            <person name="Hosoiri T."/>
            <person name="Kaku Y."/>
            <person name="Kodaira H."/>
            <person name="Kondo H."/>
            <person name="Sugawara M."/>
            <person name="Takahashi M."/>
            <person name="Kanda K."/>
            <person name="Yokoi T."/>
            <person name="Furuya T."/>
            <person name="Kikkawa E."/>
            <person name="Omura Y."/>
            <person name="Abe K."/>
            <person name="Kamihara K."/>
            <person name="Katsuta N."/>
            <person name="Sato K."/>
            <person name="Tanikawa M."/>
            <person name="Yamazaki M."/>
            <person name="Ninomiya K."/>
            <person name="Ishibashi T."/>
            <person name="Yamashita H."/>
            <person name="Murakawa K."/>
            <person name="Fujimori K."/>
            <person name="Tanai H."/>
            <person name="Kimata M."/>
            <person name="Watanabe M."/>
            <person name="Hiraoka S."/>
            <person name="Chiba Y."/>
            <person name="Ishida S."/>
            <person name="Ono Y."/>
            <person name="Takiguchi S."/>
            <person name="Watanabe S."/>
            <person name="Yosida M."/>
            <person name="Hotuta T."/>
            <person name="Kusano J."/>
            <person name="Kanehori K."/>
            <person name="Takahashi-Fujii A."/>
            <person name="Hara H."/>
            <person name="Tanase T.-O."/>
            <person name="Nomura Y."/>
            <person name="Togiya S."/>
            <person name="Komai F."/>
            <person name="Hara R."/>
            <person name="Takeuchi K."/>
            <person name="Arita M."/>
            <person name="Imose N."/>
            <person name="Musashino K."/>
            <person name="Yuuki H."/>
            <person name="Oshima A."/>
            <person name="Sasaki N."/>
            <person name="Aotsuka S."/>
            <person name="Yoshikawa Y."/>
            <person name="Matsunawa H."/>
            <person name="Ichihara T."/>
            <person name="Shiohata N."/>
            <person name="Sano S."/>
            <person name="Moriya S."/>
            <person name="Momiyama H."/>
            <person name="Satoh N."/>
            <person name="Takami S."/>
            <person name="Terashima Y."/>
            <person name="Suzuki O."/>
            <person name="Nakagawa S."/>
            <person name="Senoh A."/>
            <person name="Mizoguchi H."/>
            <person name="Goto Y."/>
            <person name="Shimizu F."/>
            <person name="Wakebe H."/>
            <person name="Hishigaki H."/>
            <person name="Watanabe T."/>
            <person name="Sugiyama A."/>
            <person name="Takemoto M."/>
            <person name="Kawakami B."/>
            <person name="Yamazaki M."/>
            <person name="Watanabe K."/>
            <person name="Kumagai A."/>
            <person name="Itakura S."/>
            <person name="Fukuzumi Y."/>
            <person name="Fujimori Y."/>
            <person name="Komiyama M."/>
            <person name="Tashiro H."/>
            <person name="Tanigami A."/>
            <person name="Fujiwara T."/>
            <person name="Ono T."/>
            <person name="Yamada K."/>
            <person name="Fujii Y."/>
            <person name="Ozaki K."/>
            <person name="Hirao M."/>
            <person name="Ohmori Y."/>
            <person name="Kawabata A."/>
            <person name="Hikiji T."/>
            <person name="Kobatake N."/>
            <person name="Inagaki H."/>
            <person name="Ikema Y."/>
            <person name="Okamoto S."/>
            <person name="Okitani R."/>
            <person name="Kawakami T."/>
            <person name="Noguchi S."/>
            <person name="Itoh T."/>
            <person name="Shigeta K."/>
            <person name="Senba T."/>
            <person name="Matsumura K."/>
            <person name="Nakajima Y."/>
            <person name="Mizuno T."/>
            <person name="Morinaga M."/>
            <person name="Sasaki M."/>
            <person name="Togashi T."/>
            <person name="Oyama M."/>
            <person name="Hata H."/>
            <person name="Watanabe M."/>
            <person name="Komatsu T."/>
            <person name="Mizushima-Sugano J."/>
            <person name="Satoh T."/>
            <person name="Shirai Y."/>
            <person name="Takahashi Y."/>
            <person name="Nakagawa K."/>
            <person name="Okumura K."/>
            <person name="Nagase T."/>
            <person name="Nomura N."/>
            <person name="Kikuchi H."/>
            <person name="Masuho Y."/>
            <person name="Yamashita R."/>
            <person name="Nakai K."/>
            <person name="Yada T."/>
            <person name="Nakamura Y."/>
            <person name="Ohara O."/>
            <person name="Isogai T."/>
            <person name="Sugano S."/>
        </authorList>
    </citation>
    <scope>NUCLEOTIDE SEQUENCE [LARGE SCALE MRNA] (ISOFORMS 2; 3; 4 AND 5)</scope>
    <source>
        <tissue>Colon</tissue>
        <tissue>Lymphoblast</tissue>
        <tissue>Trachea</tissue>
    </source>
</reference>
<reference key="6">
    <citation type="journal article" date="2005" name="Nature">
        <title>The DNA sequence of the human X chromosome.</title>
        <authorList>
            <person name="Ross M.T."/>
            <person name="Grafham D.V."/>
            <person name="Coffey A.J."/>
            <person name="Scherer S."/>
            <person name="McLay K."/>
            <person name="Muzny D."/>
            <person name="Platzer M."/>
            <person name="Howell G.R."/>
            <person name="Burrows C."/>
            <person name="Bird C.P."/>
            <person name="Frankish A."/>
            <person name="Lovell F.L."/>
            <person name="Howe K.L."/>
            <person name="Ashurst J.L."/>
            <person name="Fulton R.S."/>
            <person name="Sudbrak R."/>
            <person name="Wen G."/>
            <person name="Jones M.C."/>
            <person name="Hurles M.E."/>
            <person name="Andrews T.D."/>
            <person name="Scott C.E."/>
            <person name="Searle S."/>
            <person name="Ramser J."/>
            <person name="Whittaker A."/>
            <person name="Deadman R."/>
            <person name="Carter N.P."/>
            <person name="Hunt S.E."/>
            <person name="Chen R."/>
            <person name="Cree A."/>
            <person name="Gunaratne P."/>
            <person name="Havlak P."/>
            <person name="Hodgson A."/>
            <person name="Metzker M.L."/>
            <person name="Richards S."/>
            <person name="Scott G."/>
            <person name="Steffen D."/>
            <person name="Sodergren E."/>
            <person name="Wheeler D.A."/>
            <person name="Worley K.C."/>
            <person name="Ainscough R."/>
            <person name="Ambrose K.D."/>
            <person name="Ansari-Lari M.A."/>
            <person name="Aradhya S."/>
            <person name="Ashwell R.I."/>
            <person name="Babbage A.K."/>
            <person name="Bagguley C.L."/>
            <person name="Ballabio A."/>
            <person name="Banerjee R."/>
            <person name="Barker G.E."/>
            <person name="Barlow K.F."/>
            <person name="Barrett I.P."/>
            <person name="Bates K.N."/>
            <person name="Beare D.M."/>
            <person name="Beasley H."/>
            <person name="Beasley O."/>
            <person name="Beck A."/>
            <person name="Bethel G."/>
            <person name="Blechschmidt K."/>
            <person name="Brady N."/>
            <person name="Bray-Allen S."/>
            <person name="Bridgeman A.M."/>
            <person name="Brown A.J."/>
            <person name="Brown M.J."/>
            <person name="Bonnin D."/>
            <person name="Bruford E.A."/>
            <person name="Buhay C."/>
            <person name="Burch P."/>
            <person name="Burford D."/>
            <person name="Burgess J."/>
            <person name="Burrill W."/>
            <person name="Burton J."/>
            <person name="Bye J.M."/>
            <person name="Carder C."/>
            <person name="Carrel L."/>
            <person name="Chako J."/>
            <person name="Chapman J.C."/>
            <person name="Chavez D."/>
            <person name="Chen E."/>
            <person name="Chen G."/>
            <person name="Chen Y."/>
            <person name="Chen Z."/>
            <person name="Chinault C."/>
            <person name="Ciccodicola A."/>
            <person name="Clark S.Y."/>
            <person name="Clarke G."/>
            <person name="Clee C.M."/>
            <person name="Clegg S."/>
            <person name="Clerc-Blankenburg K."/>
            <person name="Clifford K."/>
            <person name="Cobley V."/>
            <person name="Cole C.G."/>
            <person name="Conquer J.S."/>
            <person name="Corby N."/>
            <person name="Connor R.E."/>
            <person name="David R."/>
            <person name="Davies J."/>
            <person name="Davis C."/>
            <person name="Davis J."/>
            <person name="Delgado O."/>
            <person name="Deshazo D."/>
            <person name="Dhami P."/>
            <person name="Ding Y."/>
            <person name="Dinh H."/>
            <person name="Dodsworth S."/>
            <person name="Draper H."/>
            <person name="Dugan-Rocha S."/>
            <person name="Dunham A."/>
            <person name="Dunn M."/>
            <person name="Durbin K.J."/>
            <person name="Dutta I."/>
            <person name="Eades T."/>
            <person name="Ellwood M."/>
            <person name="Emery-Cohen A."/>
            <person name="Errington H."/>
            <person name="Evans K.L."/>
            <person name="Faulkner L."/>
            <person name="Francis F."/>
            <person name="Frankland J."/>
            <person name="Fraser A.E."/>
            <person name="Galgoczy P."/>
            <person name="Gilbert J."/>
            <person name="Gill R."/>
            <person name="Gloeckner G."/>
            <person name="Gregory S.G."/>
            <person name="Gribble S."/>
            <person name="Griffiths C."/>
            <person name="Grocock R."/>
            <person name="Gu Y."/>
            <person name="Gwilliam R."/>
            <person name="Hamilton C."/>
            <person name="Hart E.A."/>
            <person name="Hawes A."/>
            <person name="Heath P.D."/>
            <person name="Heitmann K."/>
            <person name="Hennig S."/>
            <person name="Hernandez J."/>
            <person name="Hinzmann B."/>
            <person name="Ho S."/>
            <person name="Hoffs M."/>
            <person name="Howden P.J."/>
            <person name="Huckle E.J."/>
            <person name="Hume J."/>
            <person name="Hunt P.J."/>
            <person name="Hunt A.R."/>
            <person name="Isherwood J."/>
            <person name="Jacob L."/>
            <person name="Johnson D."/>
            <person name="Jones S."/>
            <person name="de Jong P.J."/>
            <person name="Joseph S.S."/>
            <person name="Keenan S."/>
            <person name="Kelly S."/>
            <person name="Kershaw J.K."/>
            <person name="Khan Z."/>
            <person name="Kioschis P."/>
            <person name="Klages S."/>
            <person name="Knights A.J."/>
            <person name="Kosiura A."/>
            <person name="Kovar-Smith C."/>
            <person name="Laird G.K."/>
            <person name="Langford C."/>
            <person name="Lawlor S."/>
            <person name="Leversha M."/>
            <person name="Lewis L."/>
            <person name="Liu W."/>
            <person name="Lloyd C."/>
            <person name="Lloyd D.M."/>
            <person name="Loulseged H."/>
            <person name="Loveland J.E."/>
            <person name="Lovell J.D."/>
            <person name="Lozado R."/>
            <person name="Lu J."/>
            <person name="Lyne R."/>
            <person name="Ma J."/>
            <person name="Maheshwari M."/>
            <person name="Matthews L.H."/>
            <person name="McDowall J."/>
            <person name="McLaren S."/>
            <person name="McMurray A."/>
            <person name="Meidl P."/>
            <person name="Meitinger T."/>
            <person name="Milne S."/>
            <person name="Miner G."/>
            <person name="Mistry S.L."/>
            <person name="Morgan M."/>
            <person name="Morris S."/>
            <person name="Mueller I."/>
            <person name="Mullikin J.C."/>
            <person name="Nguyen N."/>
            <person name="Nordsiek G."/>
            <person name="Nyakatura G."/>
            <person name="O'dell C.N."/>
            <person name="Okwuonu G."/>
            <person name="Palmer S."/>
            <person name="Pandian R."/>
            <person name="Parker D."/>
            <person name="Parrish J."/>
            <person name="Pasternak S."/>
            <person name="Patel D."/>
            <person name="Pearce A.V."/>
            <person name="Pearson D.M."/>
            <person name="Pelan S.E."/>
            <person name="Perez L."/>
            <person name="Porter K.M."/>
            <person name="Ramsey Y."/>
            <person name="Reichwald K."/>
            <person name="Rhodes S."/>
            <person name="Ridler K.A."/>
            <person name="Schlessinger D."/>
            <person name="Schueler M.G."/>
            <person name="Sehra H.K."/>
            <person name="Shaw-Smith C."/>
            <person name="Shen H."/>
            <person name="Sheridan E.M."/>
            <person name="Shownkeen R."/>
            <person name="Skuce C.D."/>
            <person name="Smith M.L."/>
            <person name="Sotheran E.C."/>
            <person name="Steingruber H.E."/>
            <person name="Steward C.A."/>
            <person name="Storey R."/>
            <person name="Swann R.M."/>
            <person name="Swarbreck D."/>
            <person name="Tabor P.E."/>
            <person name="Taudien S."/>
            <person name="Taylor T."/>
            <person name="Teague B."/>
            <person name="Thomas K."/>
            <person name="Thorpe A."/>
            <person name="Timms K."/>
            <person name="Tracey A."/>
            <person name="Trevanion S."/>
            <person name="Tromans A.C."/>
            <person name="d'Urso M."/>
            <person name="Verduzco D."/>
            <person name="Villasana D."/>
            <person name="Waldron L."/>
            <person name="Wall M."/>
            <person name="Wang Q."/>
            <person name="Warren J."/>
            <person name="Warry G.L."/>
            <person name="Wei X."/>
            <person name="West A."/>
            <person name="Whitehead S.L."/>
            <person name="Whiteley M.N."/>
            <person name="Wilkinson J.E."/>
            <person name="Willey D.L."/>
            <person name="Williams G."/>
            <person name="Williams L."/>
            <person name="Williamson A."/>
            <person name="Williamson H."/>
            <person name="Wilming L."/>
            <person name="Woodmansey R.L."/>
            <person name="Wray P.W."/>
            <person name="Yen J."/>
            <person name="Zhang J."/>
            <person name="Zhou J."/>
            <person name="Zoghbi H."/>
            <person name="Zorilla S."/>
            <person name="Buck D."/>
            <person name="Reinhardt R."/>
            <person name="Poustka A."/>
            <person name="Rosenthal A."/>
            <person name="Lehrach H."/>
            <person name="Meindl A."/>
            <person name="Minx P.J."/>
            <person name="Hillier L.W."/>
            <person name="Willard H.F."/>
            <person name="Wilson R.K."/>
            <person name="Waterston R.H."/>
            <person name="Rice C.M."/>
            <person name="Vaudin M."/>
            <person name="Coulson A."/>
            <person name="Nelson D.L."/>
            <person name="Weinstock G."/>
            <person name="Sulston J.E."/>
            <person name="Durbin R.M."/>
            <person name="Hubbard T."/>
            <person name="Gibbs R.A."/>
            <person name="Beck S."/>
            <person name="Rogers J."/>
            <person name="Bentley D.R."/>
        </authorList>
    </citation>
    <scope>NUCLEOTIDE SEQUENCE [LARGE SCALE GENOMIC DNA]</scope>
</reference>
<reference key="7">
    <citation type="submission" date="2005-07" db="EMBL/GenBank/DDBJ databases">
        <authorList>
            <person name="Mural R.J."/>
            <person name="Istrail S."/>
            <person name="Sutton G.G."/>
            <person name="Florea L."/>
            <person name="Halpern A.L."/>
            <person name="Mobarry C.M."/>
            <person name="Lippert R."/>
            <person name="Walenz B."/>
            <person name="Shatkay H."/>
            <person name="Dew I."/>
            <person name="Miller J.R."/>
            <person name="Flanigan M.J."/>
            <person name="Edwards N.J."/>
            <person name="Bolanos R."/>
            <person name="Fasulo D."/>
            <person name="Halldorsson B.V."/>
            <person name="Hannenhalli S."/>
            <person name="Turner R."/>
            <person name="Yooseph S."/>
            <person name="Lu F."/>
            <person name="Nusskern D.R."/>
            <person name="Shue B.C."/>
            <person name="Zheng X.H."/>
            <person name="Zhong F."/>
            <person name="Delcher A.L."/>
            <person name="Huson D.H."/>
            <person name="Kravitz S.A."/>
            <person name="Mouchard L."/>
            <person name="Reinert K."/>
            <person name="Remington K.A."/>
            <person name="Clark A.G."/>
            <person name="Waterman M.S."/>
            <person name="Eichler E.E."/>
            <person name="Adams M.D."/>
            <person name="Hunkapiller M.W."/>
            <person name="Myers E.W."/>
            <person name="Venter J.C."/>
        </authorList>
    </citation>
    <scope>NUCLEOTIDE SEQUENCE [LARGE SCALE GENOMIC DNA]</scope>
</reference>
<reference key="8">
    <citation type="journal article" date="2004" name="Genome Res.">
        <title>The status, quality, and expansion of the NIH full-length cDNA project: the Mammalian Gene Collection (MGC).</title>
        <authorList>
            <consortium name="The MGC Project Team"/>
        </authorList>
    </citation>
    <scope>NUCLEOTIDE SEQUENCE [LARGE SCALE MRNA] (ISOFORM 3)</scope>
    <source>
        <tissue>Pancreas</tissue>
    </source>
</reference>
<reference key="9">
    <citation type="journal article" date="2002" name="Eur. J. Biochem.">
        <title>Human and Drosophila UDP-galactose transporters transport UDP-N-acetylgalactosamine in addition to UDP-galactose.</title>
        <authorList>
            <person name="Segawa H."/>
            <person name="Kawakita M."/>
            <person name="Ishida N."/>
        </authorList>
    </citation>
    <scope>FUNCTION</scope>
    <scope>BIOPHYSICOCHEMICAL PROPERTIES</scope>
</reference>
<reference key="10">
    <citation type="journal article" date="2003" name="J. Biol. Chem.">
        <title>Substrate recognition by nucleotide sugar transporters: further characterization of substrate recognition regions by analyses of UDP-galactose/CMP-sialic acid transporter chimeras and biochemical analysis of the substrate specificity of parental and chimeric transporters.</title>
        <authorList>
            <person name="Aoki K."/>
            <person name="Ishida N."/>
            <person name="Kawakita M."/>
        </authorList>
    </citation>
    <scope>FUNCTION</scope>
    <scope>TRANSPORTER ACTIVITY</scope>
    <scope>BIOPHYSICOCHEMICAL PROPERTIES</scope>
</reference>
<reference key="11">
    <citation type="journal article" date="2005" name="Glycobiology">
        <title>Endoplasmic reticulum retention of the large splice variant of the UDP-galactose transporter is caused by a dilysine motif.</title>
        <authorList>
            <person name="Kabuss R."/>
            <person name="Ashikov A."/>
            <person name="Oelmann S."/>
            <person name="Gerardy-Schahn R."/>
            <person name="Bakker H."/>
        </authorList>
    </citation>
    <scope>SUBCELLULAR LOCATION</scope>
    <scope>MOTIF</scope>
</reference>
<reference key="12">
    <citation type="journal article" date="2012" name="FEBS Lett.">
        <title>UDP-N-acetylglucosamine transporter and UDP-galactose transporter form heterologous complexes in the Golgi membrane.</title>
        <authorList>
            <person name="Maszczak-Seneczko D."/>
            <person name="Sosicka P."/>
            <person name="Majkowski M."/>
            <person name="Olczak T."/>
            <person name="Olczak M."/>
        </authorList>
    </citation>
    <scope>INTERACTION WITH SLC35A3</scope>
</reference>
<reference key="13">
    <citation type="journal article" date="2020" name="Glycoconj. J.">
        <title>N-glycosylation of the human beta1,4-galactosyltransferase 4 is crucial for its activity and Golgi localization.</title>
        <authorList>
            <person name="Shauchuk A."/>
            <person name="Szulc B."/>
            <person name="Maszczak-Seneczko D."/>
            <person name="Wiertelak W."/>
            <person name="Skurska E."/>
            <person name="Olczak M."/>
        </authorList>
    </citation>
    <scope>INTERACTION WITH B4GALT4 (ISOFORM 2)</scope>
</reference>
<reference key="14">
    <citation type="journal article" date="2017" name="Biochim. Biophys. Acta">
        <title>An insight into the orphan nucleotide sugar transporter SLC35A4.</title>
        <authorList>
            <person name="Sosicka P."/>
            <person name="Maszczak-Seneczko D."/>
            <person name="Bazan B."/>
            <person name="Shauchuk Y."/>
            <person name="Kaczmarek B."/>
            <person name="Olczak M."/>
        </authorList>
    </citation>
    <scope>INTERACTION WITH SLC35A3</scope>
    <scope>IDENTIFICATION IN A COMPLEX WITH SLC35A3 AND SLC35A4</scope>
    <scope>SUBCELLULAR LOCATION</scope>
</reference>
<reference key="15">
    <citation type="journal article" date="2006" name="Science">
        <title>The consensus coding sequences of human breast and colorectal cancers.</title>
        <authorList>
            <person name="Sjoeblom T."/>
            <person name="Jones S."/>
            <person name="Wood L.D."/>
            <person name="Parsons D.W."/>
            <person name="Lin J."/>
            <person name="Barber T.D."/>
            <person name="Mandelker D."/>
            <person name="Leary R.J."/>
            <person name="Ptak J."/>
            <person name="Silliman N."/>
            <person name="Szabo S."/>
            <person name="Buckhaults P."/>
            <person name="Farrell C."/>
            <person name="Meeh P."/>
            <person name="Markowitz S.D."/>
            <person name="Willis J."/>
            <person name="Dawson D."/>
            <person name="Willson J.K.V."/>
            <person name="Gazdar A.F."/>
            <person name="Hartigan J."/>
            <person name="Wu L."/>
            <person name="Liu C."/>
            <person name="Parmigiani G."/>
            <person name="Park B.H."/>
            <person name="Bachman K.E."/>
            <person name="Papadopoulos N."/>
            <person name="Vogelstein B."/>
            <person name="Kinzler K.W."/>
            <person name="Velculescu V.E."/>
        </authorList>
    </citation>
    <scope>VARIANT [LARGE SCALE ANALYSIS] CYS-252</scope>
</reference>
<reference key="16">
    <citation type="journal article" date="2013" name="Am. J. Hum. Genet.">
        <title>Mosaicism of the UDP-galactose transporter SLC35A2 causes a congenital disorder of glycosylation.</title>
        <authorList>
            <consortium name="University of Washington Center for Mendelian Genomics"/>
            <person name="Ng B.G."/>
            <person name="Buckingham K.J."/>
            <person name="Raymond K."/>
            <person name="Kircher M."/>
            <person name="Turner E.H."/>
            <person name="He M."/>
            <person name="Smith J.D."/>
            <person name="Eroshkin A."/>
            <person name="Szybowska M."/>
            <person name="Losfeld M.E."/>
            <person name="Chong J.X."/>
            <person name="Kozenko M."/>
            <person name="Li C."/>
            <person name="Patterson M.C."/>
            <person name="Gilbert R.D."/>
            <person name="Nickerson D.A."/>
            <person name="Shendure J."/>
            <person name="Bamshad M.J."/>
            <person name="Freeze H.H."/>
        </authorList>
    </citation>
    <scope>VARIANT CDG2M ILE-331</scope>
    <scope>CHARACTERIZATION OF VARIANT CDG2M ILE-331</scope>
    <scope>FUNCTION</scope>
</reference>
<reference key="17">
    <citation type="journal article" date="2013" name="Hum. Mutat.">
        <title>De novo mutations in SLC35A2 encoding a UDP-galactose transporter cause early-onset epileptic encephalopathy.</title>
        <authorList>
            <person name="Kodera H."/>
            <person name="Nakamura K."/>
            <person name="Osaka H."/>
            <person name="Maegaki Y."/>
            <person name="Haginoya K."/>
            <person name="Mizumoto S."/>
            <person name="Kato M."/>
            <person name="Okamoto N."/>
            <person name="Iai M."/>
            <person name="Kondo Y."/>
            <person name="Nishiyama K."/>
            <person name="Tsurusaki Y."/>
            <person name="Nakashima M."/>
            <person name="Miyake N."/>
            <person name="Hayasaka K."/>
            <person name="Sugahara K."/>
            <person name="Yuasa I."/>
            <person name="Wada Y."/>
            <person name="Matsumoto N."/>
            <person name="Saitsu H."/>
        </authorList>
    </citation>
    <scope>INVOLVEMENT IN CDG2M</scope>
    <scope>VARIANT CDG2M PHE-213</scope>
    <scope>CHARACTERIZATION OF VARIANT CDG2M PHE-213</scope>
    <scope>SUBCELLULAR LOCATION</scope>
</reference>
<reference key="18">
    <citation type="journal article" date="2015" name="Hum. Genet.">
        <title>Genomic analysis identifies candidate pathogenic variants in 9 of 18 patients with unexplained West syndrome.</title>
        <authorList>
            <person name="Hino-Fukuyo N."/>
            <person name="Kikuchi A."/>
            <person name="Arai-Ichinoi N."/>
            <person name="Niihori T."/>
            <person name="Sato R."/>
            <person name="Suzuki T."/>
            <person name="Kudo H."/>
            <person name="Sato Y."/>
            <person name="Nakayama T."/>
            <person name="Kakisaka Y."/>
            <person name="Kubota Y."/>
            <person name="Kobayashi T."/>
            <person name="Funayama R."/>
            <person name="Nakayama K."/>
            <person name="Uematsu M."/>
            <person name="Aoki Y."/>
            <person name="Haginoya K."/>
            <person name="Kure S."/>
        </authorList>
    </citation>
    <scope>VARIANT ARG-282</scope>
</reference>
<reference key="19">
    <citation type="journal article" date="2015" name="J. Inherit. Metab. Dis.">
        <title>A new case of UDP-galactose transporter deficiency (SLC35A2-CDG): molecular basis, clinical phenotype, and therapeutic approach.</title>
        <authorList>
            <person name="Doerre K."/>
            <person name="Olczak M."/>
            <person name="Wada Y."/>
            <person name="Sosicka P."/>
            <person name="Grueneberg M."/>
            <person name="Reunert J."/>
            <person name="Kurlemann G."/>
            <person name="Fiedler B."/>
            <person name="Biskup S."/>
            <person name="Hoertnagel K."/>
            <person name="Rust S."/>
            <person name="Marquardt T."/>
        </authorList>
    </citation>
    <scope>VARIANT CDG2M VAL-266</scope>
    <scope>CHARACTERIZATION OF VARIANT CDG2M VAL-266</scope>
</reference>
<reference key="20">
    <citation type="journal article" date="2016" name="Eur. J. Hum. Genet.">
        <title>Novel genetic causes for cerebral visual impairment.</title>
        <authorList>
            <person name="Bosch D.G."/>
            <person name="Boonstra F.N."/>
            <person name="de Leeuw N."/>
            <person name="Pfundt R."/>
            <person name="Nillesen W.M."/>
            <person name="de Ligt J."/>
            <person name="Gilissen C."/>
            <person name="Jhangiani S."/>
            <person name="Lupski J.R."/>
            <person name="Cremers F.P."/>
            <person name="de Vries B.B."/>
        </authorList>
    </citation>
    <scope>VARIANT CYS-267</scope>
</reference>
<reference key="21">
    <citation type="journal article" date="2016" name="J. Med. Genet.">
        <title>Identification of novel genetic causes of Rett syndrome-like phenotypes.</title>
        <authorList>
            <person name="Lopes F."/>
            <person name="Barbosa M."/>
            <person name="Ameur A."/>
            <person name="Soares G."/>
            <person name="de Sa J."/>
            <person name="Dias A.I."/>
            <person name="Oliveira G."/>
            <person name="Cabral P."/>
            <person name="Temudo T."/>
            <person name="Calado E."/>
            <person name="Cruz I.F."/>
            <person name="Vieira J.P."/>
            <person name="Oliveira R."/>
            <person name="Esteves S."/>
            <person name="Sauer S."/>
            <person name="Jonasson I."/>
            <person name="Syvaenen A.C."/>
            <person name="Gyllensten U."/>
            <person name="Pinto D."/>
            <person name="Maciel P."/>
        </authorList>
    </citation>
    <scope>VARIANT MET-258</scope>
</reference>
<reference key="22">
    <citation type="journal article" date="2018" name="Ann. Neurol.">
        <title>Somatic SLC35A2 variants in the brain are associated with intractable neocortical epilepsy.</title>
        <authorList>
            <person name="Winawer M.R."/>
            <person name="Griffin N.G."/>
            <person name="Samanamud J."/>
            <person name="Baugh E.H."/>
            <person name="Rathakrishnan D."/>
            <person name="Ramalingam S."/>
            <person name="Zagzag D."/>
            <person name="Schevon C.A."/>
            <person name="Dugan P."/>
            <person name="Hegde M."/>
            <person name="Sheth S.A."/>
            <person name="McKhann G.M."/>
            <person name="Doyle W.K."/>
            <person name="Grant G.A."/>
            <person name="Porter B.E."/>
            <person name="Mikati M.A."/>
            <person name="Muh C.R."/>
            <person name="Malone C.D."/>
            <person name="Bergin A.M.R."/>
            <person name="Peters J.M."/>
            <person name="McBrian D.K."/>
            <person name="Pack A.M."/>
            <person name="Akman C.I."/>
            <person name="LaCoursiere C.M."/>
            <person name="Keever K.M."/>
            <person name="Madsen J.R."/>
            <person name="Yang E."/>
            <person name="Lidov H.G.W."/>
            <person name="Shain C."/>
            <person name="Allen A.S."/>
            <person name="Canoll P.D."/>
            <person name="Crino P.B."/>
            <person name="Poduri A.H."/>
            <person name="Heinzen E.L."/>
        </authorList>
    </citation>
    <scope>VARIANTS LEU-55 AND PRO-304</scope>
</reference>
<reference key="23">
    <citation type="journal article" date="2019" name="Glycobiology">
        <title>Functional analyses of the UDP-galactose transporter SLC35A2 using the binding of bacterial Shiga toxins as a novel activity assay.</title>
        <authorList>
            <person name="Li D."/>
            <person name="Mukhopadhyay S."/>
        </authorList>
    </citation>
    <scope>CHARACTERIZATION OF VARIANTS LEU-55; MET-258; CYS-267; ARG-282 AND PRO-304</scope>
    <scope>CHARACTERIZATION OF VARIANTS CDG2M PHE-213; VAL-266 AND ILE-331</scope>
    <scope>MUTAGENESIS OF LYS-78; GLY-202; GLY-214 AND LYS-297</scope>
    <scope>FUNCTION</scope>
</reference>
<reference key="24">
    <citation type="journal article" date="2019" name="Hum. Mutat.">
        <title>SLC35A2-CDG: Functional characterization, expanded molecular, clinical, and biochemical phenotypes of 30 unreported individuals.</title>
        <authorList>
            <person name="Ng B.G."/>
            <person name="Sosicka P."/>
            <person name="Agadi S."/>
            <person name="Almannai M."/>
            <person name="Bacino C.A."/>
            <person name="Barone R."/>
            <person name="Botto L.D."/>
            <person name="Burton J.E."/>
            <person name="Carlston C."/>
            <person name="Chung B.H."/>
            <person name="Cohen J.S."/>
            <person name="Coman D."/>
            <person name="Dipple K.M."/>
            <person name="Dorrani N."/>
            <person name="Dobyns W.B."/>
            <person name="Elias A.F."/>
            <person name="Epstein L."/>
            <person name="Gahl W.A."/>
            <person name="Garozzo D."/>
            <person name="Hammer T.B."/>
            <person name="Haven J."/>
            <person name="Heron D."/>
            <person name="Herzog M."/>
            <person name="Hoganson G.E."/>
            <person name="Hunter J.M."/>
            <person name="Jain M."/>
            <person name="Juusola J."/>
            <person name="Lakhani S."/>
            <person name="Lee H."/>
            <person name="Lee J."/>
            <person name="Lewis K."/>
            <person name="Longo N."/>
            <person name="Lourenco C.M."/>
            <person name="Mak C.C.Y."/>
            <person name="McKnight D."/>
            <person name="Mendelsohn B.A."/>
            <person name="Mignot C."/>
            <person name="Mirzaa G."/>
            <person name="Mitchell W."/>
            <person name="Muhle H."/>
            <person name="Nelson S.F."/>
            <person name="Olczak M."/>
            <person name="Palmer C.G.S."/>
            <person name="Partikian A."/>
            <person name="Patterson M.C."/>
            <person name="Pierson T.M."/>
            <person name="Quinonez S.C."/>
            <person name="Regan B.M."/>
            <person name="Ross M.E."/>
            <person name="Guillen Sacoto M.J."/>
            <person name="Scaglia F."/>
            <person name="Scheffer I.E."/>
            <person name="Segal D."/>
            <person name="Singhal N.S."/>
            <person name="Striano P."/>
            <person name="Sturiale L."/>
            <person name="Symonds J.D."/>
            <person name="Tang S."/>
            <person name="Vilain E."/>
            <person name="Willis M."/>
            <person name="Wolfe L.A."/>
            <person name="Yang H."/>
            <person name="Yano S."/>
            <person name="Powis Z."/>
            <person name="Suchy S.F."/>
            <person name="Rosenfeld J.A."/>
            <person name="Edmondson A.C."/>
            <person name="Grunewald S."/>
            <person name="Freeze H.H."/>
        </authorList>
    </citation>
    <scope>VARIANTS CDG2M PRO-55; 56-TYR--SER-396 DEL; 65-PHE--THR-68 DEL; MET-71; PHE-82; PRO-101; PRO-116; ARG-118; CYS-130; 168-GLN--SER-396 DEL; LEU-175 DEL; PHE-175; 183-GLN--SER-396 DEL; SER-188; PRO-233; 272-TRP--SER-396 DEL; ASP-273; PRO-303; TYR-312; PRO-315 AND ILE-331</scope>
    <scope>CHARACTERIZATION OF VARIANTS CDG2M MET-71; PHE-82; CYS-130; 168-GLN--SER-396 DEL; PRO-233 AND PRO-315</scope>
    <scope>FUNCTION</scope>
</reference>
<reference key="25">
    <citation type="journal article" date="2021" name="J. Biol. Chem.">
        <title>A three-pocket model for substrate coordination and selectivity by the nucleotide sugar transporters SLC35A1 and SLC35A2.</title>
        <authorList>
            <person name="Li D."/>
            <person name="Mukhopadhyay S."/>
        </authorList>
    </citation>
    <scope>MUTAGENESIS OF PHE-65; GLU-75; GLN-125; ASN-126; GLN-129; PHE-141; GLN-142; TYR-145; GLN-146; LYS-148; THR-152; SER-213; ASN-235; GLY-239; ASN-277; GLN-278; VAL-285; ASN-294; LYS-297; THR-301 AND SER-308</scope>
    <scope>CHARACTERIZATION OF VARIANTS CDG2M MET-71; PHE-82; CYS-130; PHE-175; PRO-233; ASP-273 AND PRO-315</scope>
</reference>
<reference key="26">
    <citation type="journal article" date="2023" name="BMC Res. Notes">
        <title>Abnormal expression of lysosomal glycoproteins in patients with congenital disorders of glycosylation.</title>
        <authorList>
            <person name="Sabry S."/>
            <person name="Eissa N.R."/>
            <person name="Zaki M.S."/>
        </authorList>
    </citation>
    <scope>VARIANT CDG2M ARG-16</scope>
</reference>
<evidence type="ECO:0000255" key="1"/>
<evidence type="ECO:0000256" key="2">
    <source>
        <dbReference type="SAM" id="MobiDB-lite"/>
    </source>
</evidence>
<evidence type="ECO:0000269" key="3">
    <source>
    </source>
</evidence>
<evidence type="ECO:0000269" key="4">
    <source>
    </source>
</evidence>
<evidence type="ECO:0000269" key="5">
    <source>
    </source>
</evidence>
<evidence type="ECO:0000269" key="6">
    <source>
    </source>
</evidence>
<evidence type="ECO:0000269" key="7">
    <source>
    </source>
</evidence>
<evidence type="ECO:0000269" key="8">
    <source>
    </source>
</evidence>
<evidence type="ECO:0000269" key="9">
    <source>
    </source>
</evidence>
<evidence type="ECO:0000269" key="10">
    <source>
    </source>
</evidence>
<evidence type="ECO:0000269" key="11">
    <source>
    </source>
</evidence>
<evidence type="ECO:0000269" key="12">
    <source>
    </source>
</evidence>
<evidence type="ECO:0000269" key="13">
    <source>
    </source>
</evidence>
<evidence type="ECO:0000269" key="14">
    <source>
    </source>
</evidence>
<evidence type="ECO:0000269" key="15">
    <source>
    </source>
</evidence>
<evidence type="ECO:0000269" key="16">
    <source>
    </source>
</evidence>
<evidence type="ECO:0000269" key="17">
    <source>
    </source>
</evidence>
<evidence type="ECO:0000269" key="18">
    <source>
    </source>
</evidence>
<evidence type="ECO:0000269" key="19">
    <source>
    </source>
</evidence>
<evidence type="ECO:0000269" key="20">
    <source>
    </source>
</evidence>
<evidence type="ECO:0000269" key="21">
    <source>
    </source>
</evidence>
<evidence type="ECO:0000303" key="22">
    <source>
    </source>
</evidence>
<evidence type="ECO:0000303" key="23">
    <source>
    </source>
</evidence>
<evidence type="ECO:0000303" key="24">
    <source>
    </source>
</evidence>
<evidence type="ECO:0000305" key="25"/>
<evidence type="ECO:0000305" key="26">
    <source>
    </source>
</evidence>
<evidence type="ECO:0000312" key="27">
    <source>
        <dbReference type="HGNC" id="HGNC:11022"/>
    </source>
</evidence>
<protein>
    <recommendedName>
        <fullName evidence="26">UDP-galactose translocator</fullName>
    </recommendedName>
    <alternativeName>
        <fullName evidence="27">Solute carrier family 35 member A2</fullName>
    </alternativeName>
    <alternativeName>
        <fullName>UDP-galactose transporter</fullName>
        <shortName>UDP-Gal-Tr</shortName>
        <shortName>UGT</shortName>
    </alternativeName>
</protein>
<sequence length="396" mass="41307">MAAVGAGGSTAAPGPGAVSAGALEPGTASAAHRRLKYISLAVLVVQNASLILSIRYARTLPGDRFFATTAVVMAEVLKGLTCLLLLFAQKRGNVKHLVLFLHEAVLVQYVDTLKLAVPSLIYTLQNNLQYVAISNLPAATFQVTYQLKILTTALFSVLMLNRSLSRLQWASLLLLFTGVAIVQAQQAGGGGPRPLDQNPGAGLAAVVASCLSSGFAGVYFEKILKGSSGSVWLRNLQLGLFGTALGLVGLWWAEGTAVATRGFFFGYTPAVWGVVLNQAFGGLLVAVVVKYADNILKGFATSLSIVLSTVASIRLFGFHVDPLFALGAGLVIGAVYLYSLPRGAAKAIASASASASGPCVHQQPPGQPPPPQLSSHRGDLITEPFLPKLLTKVKGS</sequence>
<name>S35A2_HUMAN</name>
<proteinExistence type="evidence at protein level"/>